<feature type="chain" id="PRO_0000240770" description="Argininosuccinate lyase">
    <location>
        <begin position="1"/>
        <end position="457"/>
    </location>
</feature>
<comment type="catalytic activity">
    <reaction evidence="1">
        <text>2-(N(omega)-L-arginino)succinate = fumarate + L-arginine</text>
        <dbReference type="Rhea" id="RHEA:24020"/>
        <dbReference type="ChEBI" id="CHEBI:29806"/>
        <dbReference type="ChEBI" id="CHEBI:32682"/>
        <dbReference type="ChEBI" id="CHEBI:57472"/>
        <dbReference type="EC" id="4.3.2.1"/>
    </reaction>
</comment>
<comment type="pathway">
    <text evidence="1">Amino-acid biosynthesis; L-arginine biosynthesis; L-arginine from L-ornithine and carbamoyl phosphate: step 3/3.</text>
</comment>
<comment type="subcellular location">
    <subcellularLocation>
        <location evidence="1">Cytoplasm</location>
    </subcellularLocation>
</comment>
<comment type="similarity">
    <text evidence="1">Belongs to the lyase 1 family. Argininosuccinate lyase subfamily.</text>
</comment>
<keyword id="KW-0028">Amino-acid biosynthesis</keyword>
<keyword id="KW-0055">Arginine biosynthesis</keyword>
<keyword id="KW-0963">Cytoplasm</keyword>
<keyword id="KW-0456">Lyase</keyword>
<keyword id="KW-1185">Reference proteome</keyword>
<reference key="1">
    <citation type="journal article" date="2005" name="Nucleic Acids Res.">
        <title>Genome dynamics and diversity of Shigella species, the etiologic agents of bacillary dysentery.</title>
        <authorList>
            <person name="Yang F."/>
            <person name="Yang J."/>
            <person name="Zhang X."/>
            <person name="Chen L."/>
            <person name="Jiang Y."/>
            <person name="Yan Y."/>
            <person name="Tang X."/>
            <person name="Wang J."/>
            <person name="Xiong Z."/>
            <person name="Dong J."/>
            <person name="Xue Y."/>
            <person name="Zhu Y."/>
            <person name="Xu X."/>
            <person name="Sun L."/>
            <person name="Chen S."/>
            <person name="Nie H."/>
            <person name="Peng J."/>
            <person name="Xu J."/>
            <person name="Wang Y."/>
            <person name="Yuan Z."/>
            <person name="Wen Y."/>
            <person name="Yao Z."/>
            <person name="Shen Y."/>
            <person name="Qiang B."/>
            <person name="Hou Y."/>
            <person name="Yu J."/>
            <person name="Jin Q."/>
        </authorList>
    </citation>
    <scope>NUCLEOTIDE SEQUENCE [LARGE SCALE GENOMIC DNA]</scope>
    <source>
        <strain>Ss046</strain>
    </source>
</reference>
<organism>
    <name type="scientific">Shigella sonnei (strain Ss046)</name>
    <dbReference type="NCBI Taxonomy" id="300269"/>
    <lineage>
        <taxon>Bacteria</taxon>
        <taxon>Pseudomonadati</taxon>
        <taxon>Pseudomonadota</taxon>
        <taxon>Gammaproteobacteria</taxon>
        <taxon>Enterobacterales</taxon>
        <taxon>Enterobacteriaceae</taxon>
        <taxon>Shigella</taxon>
    </lineage>
</organism>
<evidence type="ECO:0000255" key="1">
    <source>
        <dbReference type="HAMAP-Rule" id="MF_00006"/>
    </source>
</evidence>
<sequence length="457" mass="50230">MALWGGRFTQAADQRFKQFNDSLRFDYRLAEQDIVGSVAWSKALVTVGVLTAEEQAQLEEALSVLLEDVRARPQQILESDAEDIHSWVEGKLIDKVGQLGKKLHTGRSRNDQVATDLKLWCKDTVSELLTANRQLQSALVETAQNNQDAVMPGYTHLQRAQPVTFAHWCLAYVEMLARDESRLQDALKRLDVSPLGCGALAGTAYEIDREQLAGWLGFASATRNSLDSVSDRDHVLELLSAAAIGMVHLSRFAEDLIFFNTGEAGFVELSDRVTSGSSLMPQKKNPDALELIRGKCGRVQGALTGMMMTLKGLPLAYNKDMQEDKEGLFDALDTWLDCLHMAALVLDGIQVKRPRCQEAAQQGYANATELADYLVAKGVPFREAHHIVGEAVVEAIRQGKPLEDLPLDELQKFSPVIGEDVYPILSLQSCLDKRAAKGGVSPQQVAQAIAFAQARLG</sequence>
<accession>Q3YV16</accession>
<dbReference type="EC" id="4.3.2.1" evidence="1"/>
<dbReference type="EMBL" id="CP000038">
    <property type="protein sequence ID" value="AAZ90646.1"/>
    <property type="molecule type" value="Genomic_DNA"/>
</dbReference>
<dbReference type="RefSeq" id="WP_001230107.1">
    <property type="nucleotide sequence ID" value="NC_007384.1"/>
</dbReference>
<dbReference type="SMR" id="Q3YV16"/>
<dbReference type="KEGG" id="ssn:SSON_4133"/>
<dbReference type="HOGENOM" id="CLU_027272_2_3_6"/>
<dbReference type="UniPathway" id="UPA00068">
    <property type="reaction ID" value="UER00114"/>
</dbReference>
<dbReference type="Proteomes" id="UP000002529">
    <property type="component" value="Chromosome"/>
</dbReference>
<dbReference type="GO" id="GO:0005829">
    <property type="term" value="C:cytosol"/>
    <property type="evidence" value="ECO:0007669"/>
    <property type="project" value="TreeGrafter"/>
</dbReference>
<dbReference type="GO" id="GO:0004056">
    <property type="term" value="F:argininosuccinate lyase activity"/>
    <property type="evidence" value="ECO:0007669"/>
    <property type="project" value="UniProtKB-UniRule"/>
</dbReference>
<dbReference type="GO" id="GO:0042450">
    <property type="term" value="P:arginine biosynthetic process via ornithine"/>
    <property type="evidence" value="ECO:0007669"/>
    <property type="project" value="InterPro"/>
</dbReference>
<dbReference type="GO" id="GO:0006526">
    <property type="term" value="P:L-arginine biosynthetic process"/>
    <property type="evidence" value="ECO:0007669"/>
    <property type="project" value="UniProtKB-UniRule"/>
</dbReference>
<dbReference type="CDD" id="cd01359">
    <property type="entry name" value="Argininosuccinate_lyase"/>
    <property type="match status" value="1"/>
</dbReference>
<dbReference type="FunFam" id="1.10.275.10:FF:000004">
    <property type="entry name" value="Argininosuccinate lyase"/>
    <property type="match status" value="1"/>
</dbReference>
<dbReference type="FunFam" id="1.10.40.30:FF:000001">
    <property type="entry name" value="Argininosuccinate lyase"/>
    <property type="match status" value="1"/>
</dbReference>
<dbReference type="FunFam" id="1.20.200.10:FF:000006">
    <property type="entry name" value="Argininosuccinate lyase"/>
    <property type="match status" value="1"/>
</dbReference>
<dbReference type="Gene3D" id="1.10.40.30">
    <property type="entry name" value="Fumarase/aspartase (C-terminal domain)"/>
    <property type="match status" value="1"/>
</dbReference>
<dbReference type="Gene3D" id="1.20.200.10">
    <property type="entry name" value="Fumarase/aspartase (Central domain)"/>
    <property type="match status" value="1"/>
</dbReference>
<dbReference type="Gene3D" id="1.10.275.10">
    <property type="entry name" value="Fumarase/aspartase (N-terminal domain)"/>
    <property type="match status" value="1"/>
</dbReference>
<dbReference type="HAMAP" id="MF_00006">
    <property type="entry name" value="Arg_succ_lyase"/>
    <property type="match status" value="1"/>
</dbReference>
<dbReference type="InterPro" id="IPR029419">
    <property type="entry name" value="Arg_succ_lyase_C"/>
</dbReference>
<dbReference type="InterPro" id="IPR009049">
    <property type="entry name" value="Argininosuccinate_lyase"/>
</dbReference>
<dbReference type="InterPro" id="IPR024083">
    <property type="entry name" value="Fumarase/histidase_N"/>
</dbReference>
<dbReference type="InterPro" id="IPR020557">
    <property type="entry name" value="Fumarate_lyase_CS"/>
</dbReference>
<dbReference type="InterPro" id="IPR000362">
    <property type="entry name" value="Fumarate_lyase_fam"/>
</dbReference>
<dbReference type="InterPro" id="IPR022761">
    <property type="entry name" value="Fumarate_lyase_N"/>
</dbReference>
<dbReference type="InterPro" id="IPR008948">
    <property type="entry name" value="L-Aspartase-like"/>
</dbReference>
<dbReference type="NCBIfam" id="TIGR00838">
    <property type="entry name" value="argH"/>
    <property type="match status" value="1"/>
</dbReference>
<dbReference type="NCBIfam" id="NF008964">
    <property type="entry name" value="PRK12308.1"/>
    <property type="match status" value="1"/>
</dbReference>
<dbReference type="PANTHER" id="PTHR43814">
    <property type="entry name" value="ARGININOSUCCINATE LYASE"/>
    <property type="match status" value="1"/>
</dbReference>
<dbReference type="PANTHER" id="PTHR43814:SF1">
    <property type="entry name" value="ARGININOSUCCINATE LYASE"/>
    <property type="match status" value="1"/>
</dbReference>
<dbReference type="Pfam" id="PF14698">
    <property type="entry name" value="ASL_C2"/>
    <property type="match status" value="1"/>
</dbReference>
<dbReference type="Pfam" id="PF00206">
    <property type="entry name" value="Lyase_1"/>
    <property type="match status" value="1"/>
</dbReference>
<dbReference type="PRINTS" id="PR00145">
    <property type="entry name" value="ARGSUCLYASE"/>
</dbReference>
<dbReference type="PRINTS" id="PR00149">
    <property type="entry name" value="FUMRATELYASE"/>
</dbReference>
<dbReference type="SUPFAM" id="SSF48557">
    <property type="entry name" value="L-aspartase-like"/>
    <property type="match status" value="1"/>
</dbReference>
<dbReference type="PROSITE" id="PS00163">
    <property type="entry name" value="FUMARATE_LYASES"/>
    <property type="match status" value="1"/>
</dbReference>
<proteinExistence type="inferred from homology"/>
<protein>
    <recommendedName>
        <fullName evidence="1">Argininosuccinate lyase</fullName>
        <shortName evidence="1">ASAL</shortName>
        <ecNumber evidence="1">4.3.2.1</ecNumber>
    </recommendedName>
    <alternativeName>
        <fullName evidence="1">Arginosuccinase</fullName>
    </alternativeName>
</protein>
<name>ARLY_SHISS</name>
<gene>
    <name evidence="1" type="primary">argH</name>
    <name type="ordered locus">SSON_4133</name>
</gene>